<sequence length="309" mass="33685">MGINLKVSRPKAGSNINMSNTFHTIGLIGKPNHKGTTLTLKRLHHWLSMQGYKVLVEERVAGELGPQVQSVDLLEIGEQCDLAIVVGGDGNMLGAARVLARFSVGVIGVNRGNLGFLTDLPPDSFEEALSKVLEGEFEIEQRFLLEAEVHRHGELKSSNTAVNEAVLHPGKIAYMIEFEVYIDDKFMYSQRADGIIISTPTGSTAYSLSAGGAILTPNLSAVILVPMFPHTLSCRPIVVDAASIIKLVVSPHNSDNLEVSCDGHVHLSVLPGDEIIIKRSQETLRLVHPKGHNYFHVLRTKLGWGSKLF</sequence>
<protein>
    <recommendedName>
        <fullName evidence="1">NAD kinase</fullName>
        <ecNumber evidence="1">2.7.1.23</ecNumber>
    </recommendedName>
    <alternativeName>
        <fullName evidence="1">ATP-dependent NAD kinase</fullName>
    </alternativeName>
</protein>
<proteinExistence type="inferred from homology"/>
<name>NADK_SHEHH</name>
<comment type="function">
    <text evidence="1">Involved in the regulation of the intracellular balance of NAD and NADP, and is a key enzyme in the biosynthesis of NADP. Catalyzes specifically the phosphorylation on 2'-hydroxyl of the adenosine moiety of NAD to yield NADP.</text>
</comment>
<comment type="catalytic activity">
    <reaction evidence="1">
        <text>NAD(+) + ATP = ADP + NADP(+) + H(+)</text>
        <dbReference type="Rhea" id="RHEA:18629"/>
        <dbReference type="ChEBI" id="CHEBI:15378"/>
        <dbReference type="ChEBI" id="CHEBI:30616"/>
        <dbReference type="ChEBI" id="CHEBI:57540"/>
        <dbReference type="ChEBI" id="CHEBI:58349"/>
        <dbReference type="ChEBI" id="CHEBI:456216"/>
        <dbReference type="EC" id="2.7.1.23"/>
    </reaction>
</comment>
<comment type="cofactor">
    <cofactor evidence="1">
        <name>a divalent metal cation</name>
        <dbReference type="ChEBI" id="CHEBI:60240"/>
    </cofactor>
</comment>
<comment type="subcellular location">
    <subcellularLocation>
        <location evidence="1">Cytoplasm</location>
    </subcellularLocation>
</comment>
<comment type="similarity">
    <text evidence="1">Belongs to the NAD kinase family.</text>
</comment>
<evidence type="ECO:0000255" key="1">
    <source>
        <dbReference type="HAMAP-Rule" id="MF_00361"/>
    </source>
</evidence>
<gene>
    <name evidence="1" type="primary">nadK</name>
    <name type="ordered locus">Shal_3082</name>
</gene>
<dbReference type="EC" id="2.7.1.23" evidence="1"/>
<dbReference type="EMBL" id="CP000931">
    <property type="protein sequence ID" value="ABZ77630.1"/>
    <property type="molecule type" value="Genomic_DNA"/>
</dbReference>
<dbReference type="SMR" id="B0TQ38"/>
<dbReference type="STRING" id="458817.Shal_3082"/>
<dbReference type="KEGG" id="shl:Shal_3082"/>
<dbReference type="eggNOG" id="COG0061">
    <property type="taxonomic scope" value="Bacteria"/>
</dbReference>
<dbReference type="HOGENOM" id="CLU_008831_0_1_6"/>
<dbReference type="Proteomes" id="UP000001317">
    <property type="component" value="Chromosome"/>
</dbReference>
<dbReference type="GO" id="GO:0005737">
    <property type="term" value="C:cytoplasm"/>
    <property type="evidence" value="ECO:0007669"/>
    <property type="project" value="UniProtKB-SubCell"/>
</dbReference>
<dbReference type="GO" id="GO:0005524">
    <property type="term" value="F:ATP binding"/>
    <property type="evidence" value="ECO:0007669"/>
    <property type="project" value="UniProtKB-KW"/>
</dbReference>
<dbReference type="GO" id="GO:0046872">
    <property type="term" value="F:metal ion binding"/>
    <property type="evidence" value="ECO:0007669"/>
    <property type="project" value="UniProtKB-UniRule"/>
</dbReference>
<dbReference type="GO" id="GO:0051287">
    <property type="term" value="F:NAD binding"/>
    <property type="evidence" value="ECO:0007669"/>
    <property type="project" value="UniProtKB-ARBA"/>
</dbReference>
<dbReference type="GO" id="GO:0003951">
    <property type="term" value="F:NAD+ kinase activity"/>
    <property type="evidence" value="ECO:0007669"/>
    <property type="project" value="UniProtKB-UniRule"/>
</dbReference>
<dbReference type="GO" id="GO:0019674">
    <property type="term" value="P:NAD metabolic process"/>
    <property type="evidence" value="ECO:0007669"/>
    <property type="project" value="InterPro"/>
</dbReference>
<dbReference type="GO" id="GO:0006741">
    <property type="term" value="P:NADP biosynthetic process"/>
    <property type="evidence" value="ECO:0007669"/>
    <property type="project" value="UniProtKB-UniRule"/>
</dbReference>
<dbReference type="FunFam" id="2.60.200.30:FF:000001">
    <property type="entry name" value="NAD kinase"/>
    <property type="match status" value="1"/>
</dbReference>
<dbReference type="Gene3D" id="3.40.50.10330">
    <property type="entry name" value="Probable inorganic polyphosphate/atp-NAD kinase, domain 1"/>
    <property type="match status" value="1"/>
</dbReference>
<dbReference type="Gene3D" id="2.60.200.30">
    <property type="entry name" value="Probable inorganic polyphosphate/atp-NAD kinase, domain 2"/>
    <property type="match status" value="1"/>
</dbReference>
<dbReference type="HAMAP" id="MF_00361">
    <property type="entry name" value="NAD_kinase"/>
    <property type="match status" value="1"/>
</dbReference>
<dbReference type="InterPro" id="IPR017438">
    <property type="entry name" value="ATP-NAD_kinase_N"/>
</dbReference>
<dbReference type="InterPro" id="IPR017437">
    <property type="entry name" value="ATP-NAD_kinase_PpnK-typ_C"/>
</dbReference>
<dbReference type="InterPro" id="IPR016064">
    <property type="entry name" value="NAD/diacylglycerol_kinase_sf"/>
</dbReference>
<dbReference type="InterPro" id="IPR002504">
    <property type="entry name" value="NADK"/>
</dbReference>
<dbReference type="NCBIfam" id="NF002306">
    <property type="entry name" value="PRK01231.1"/>
    <property type="match status" value="1"/>
</dbReference>
<dbReference type="NCBIfam" id="NF002893">
    <property type="entry name" value="PRK03378.1"/>
    <property type="match status" value="1"/>
</dbReference>
<dbReference type="PANTHER" id="PTHR20275">
    <property type="entry name" value="NAD KINASE"/>
    <property type="match status" value="1"/>
</dbReference>
<dbReference type="PANTHER" id="PTHR20275:SF0">
    <property type="entry name" value="NAD KINASE"/>
    <property type="match status" value="1"/>
</dbReference>
<dbReference type="Pfam" id="PF01513">
    <property type="entry name" value="NAD_kinase"/>
    <property type="match status" value="1"/>
</dbReference>
<dbReference type="Pfam" id="PF20143">
    <property type="entry name" value="NAD_kinase_C"/>
    <property type="match status" value="1"/>
</dbReference>
<dbReference type="SUPFAM" id="SSF111331">
    <property type="entry name" value="NAD kinase/diacylglycerol kinase-like"/>
    <property type="match status" value="1"/>
</dbReference>
<accession>B0TQ38</accession>
<feature type="chain" id="PRO_1000079514" description="NAD kinase">
    <location>
        <begin position="1"/>
        <end position="309"/>
    </location>
</feature>
<feature type="active site" description="Proton acceptor" evidence="1">
    <location>
        <position position="89"/>
    </location>
</feature>
<feature type="binding site" evidence="1">
    <location>
        <begin position="89"/>
        <end position="90"/>
    </location>
    <ligand>
        <name>NAD(+)</name>
        <dbReference type="ChEBI" id="CHEBI:57540"/>
    </ligand>
</feature>
<feature type="binding site" evidence="1">
    <location>
        <begin position="163"/>
        <end position="164"/>
    </location>
    <ligand>
        <name>NAD(+)</name>
        <dbReference type="ChEBI" id="CHEBI:57540"/>
    </ligand>
</feature>
<feature type="binding site" evidence="1">
    <location>
        <position position="191"/>
    </location>
    <ligand>
        <name>NAD(+)</name>
        <dbReference type="ChEBI" id="CHEBI:57540"/>
    </ligand>
</feature>
<feature type="binding site" evidence="1">
    <location>
        <position position="193"/>
    </location>
    <ligand>
        <name>NAD(+)</name>
        <dbReference type="ChEBI" id="CHEBI:57540"/>
    </ligand>
</feature>
<feature type="binding site" evidence="1">
    <location>
        <begin position="204"/>
        <end position="209"/>
    </location>
    <ligand>
        <name>NAD(+)</name>
        <dbReference type="ChEBI" id="CHEBI:57540"/>
    </ligand>
</feature>
<reference key="1">
    <citation type="submission" date="2008-01" db="EMBL/GenBank/DDBJ databases">
        <title>Complete sequence of Shewanella halifaxensis HAW-EB4.</title>
        <authorList>
            <consortium name="US DOE Joint Genome Institute"/>
            <person name="Copeland A."/>
            <person name="Lucas S."/>
            <person name="Lapidus A."/>
            <person name="Glavina del Rio T."/>
            <person name="Dalin E."/>
            <person name="Tice H."/>
            <person name="Bruce D."/>
            <person name="Goodwin L."/>
            <person name="Pitluck S."/>
            <person name="Sims D."/>
            <person name="Brettin T."/>
            <person name="Detter J.C."/>
            <person name="Han C."/>
            <person name="Kuske C.R."/>
            <person name="Schmutz J."/>
            <person name="Larimer F."/>
            <person name="Land M."/>
            <person name="Hauser L."/>
            <person name="Kyrpides N."/>
            <person name="Kim E."/>
            <person name="Zhao J.-S."/>
            <person name="Richardson P."/>
        </authorList>
    </citation>
    <scope>NUCLEOTIDE SEQUENCE [LARGE SCALE GENOMIC DNA]</scope>
    <source>
        <strain>HAW-EB4</strain>
    </source>
</reference>
<keyword id="KW-0067">ATP-binding</keyword>
<keyword id="KW-0963">Cytoplasm</keyword>
<keyword id="KW-0418">Kinase</keyword>
<keyword id="KW-0520">NAD</keyword>
<keyword id="KW-0521">NADP</keyword>
<keyword id="KW-0547">Nucleotide-binding</keyword>
<keyword id="KW-0808">Transferase</keyword>
<organism>
    <name type="scientific">Shewanella halifaxensis (strain HAW-EB4)</name>
    <dbReference type="NCBI Taxonomy" id="458817"/>
    <lineage>
        <taxon>Bacteria</taxon>
        <taxon>Pseudomonadati</taxon>
        <taxon>Pseudomonadota</taxon>
        <taxon>Gammaproteobacteria</taxon>
        <taxon>Alteromonadales</taxon>
        <taxon>Shewanellaceae</taxon>
        <taxon>Shewanella</taxon>
    </lineage>
</organism>